<comment type="function">
    <text evidence="1">Functions as an E3 ubiquitin ligase.</text>
</comment>
<comment type="catalytic activity">
    <reaction>
        <text>S-ubiquitinyl-[E2 ubiquitin-conjugating enzyme]-L-cysteine + [acceptor protein]-L-lysine = [E2 ubiquitin-conjugating enzyme]-L-cysteine + N(6)-ubiquitinyl-[acceptor protein]-L-lysine.</text>
        <dbReference type="EC" id="2.3.2.27"/>
    </reaction>
</comment>
<comment type="pathway">
    <text>Protein modification; protein ubiquitination.</text>
</comment>
<comment type="subunit">
    <text>Binds to SD129 and SD25.</text>
</comment>
<accession>Q9LSA6</accession>
<accession>Q8GXX8</accession>
<organism>
    <name type="scientific">Arabidopsis thaliana</name>
    <name type="common">Mouse-ear cress</name>
    <dbReference type="NCBI Taxonomy" id="3702"/>
    <lineage>
        <taxon>Eukaryota</taxon>
        <taxon>Viridiplantae</taxon>
        <taxon>Streptophyta</taxon>
        <taxon>Embryophyta</taxon>
        <taxon>Tracheophyta</taxon>
        <taxon>Spermatophyta</taxon>
        <taxon>Magnoliopsida</taxon>
        <taxon>eudicotyledons</taxon>
        <taxon>Gunneridae</taxon>
        <taxon>Pentapetalae</taxon>
        <taxon>rosids</taxon>
        <taxon>malvids</taxon>
        <taxon>Brassicales</taxon>
        <taxon>Brassicaceae</taxon>
        <taxon>Camelineae</taxon>
        <taxon>Arabidopsis</taxon>
    </lineage>
</organism>
<name>PUB29_ARATH</name>
<reference key="1">
    <citation type="journal article" date="2000" name="DNA Res.">
        <title>Structural analysis of Arabidopsis thaliana chromosome 3. I. Sequence features of the regions of 4,504,864 bp covered by sixty P1 and TAC clones.</title>
        <authorList>
            <person name="Sato S."/>
            <person name="Nakamura Y."/>
            <person name="Kaneko T."/>
            <person name="Katoh T."/>
            <person name="Asamizu E."/>
            <person name="Tabata S."/>
        </authorList>
    </citation>
    <scope>NUCLEOTIDE SEQUENCE [LARGE SCALE GENOMIC DNA]</scope>
    <source>
        <strain>cv. Columbia</strain>
    </source>
</reference>
<reference key="2">
    <citation type="journal article" date="2017" name="Plant J.">
        <title>Araport11: a complete reannotation of the Arabidopsis thaliana reference genome.</title>
        <authorList>
            <person name="Cheng C.Y."/>
            <person name="Krishnakumar V."/>
            <person name="Chan A.P."/>
            <person name="Thibaud-Nissen F."/>
            <person name="Schobel S."/>
            <person name="Town C.D."/>
        </authorList>
    </citation>
    <scope>GENOME REANNOTATION</scope>
    <source>
        <strain>cv. Columbia</strain>
    </source>
</reference>
<reference key="3">
    <citation type="journal article" date="2002" name="Science">
        <title>Functional annotation of a full-length Arabidopsis cDNA collection.</title>
        <authorList>
            <person name="Seki M."/>
            <person name="Narusaka M."/>
            <person name="Kamiya A."/>
            <person name="Ishida J."/>
            <person name="Satou M."/>
            <person name="Sakurai T."/>
            <person name="Nakajima M."/>
            <person name="Enju A."/>
            <person name="Akiyama K."/>
            <person name="Oono Y."/>
            <person name="Muramatsu M."/>
            <person name="Hayashizaki Y."/>
            <person name="Kawai J."/>
            <person name="Carninci P."/>
            <person name="Itoh M."/>
            <person name="Ishii Y."/>
            <person name="Arakawa T."/>
            <person name="Shibata K."/>
            <person name="Shinagawa A."/>
            <person name="Shinozaki K."/>
        </authorList>
    </citation>
    <scope>NUCLEOTIDE SEQUENCE [LARGE SCALE MRNA]</scope>
    <source>
        <strain>cv. Columbia</strain>
    </source>
</reference>
<reference key="4">
    <citation type="journal article" date="2003" name="Science">
        <title>Empirical analysis of transcriptional activity in the Arabidopsis genome.</title>
        <authorList>
            <person name="Yamada K."/>
            <person name="Lim J."/>
            <person name="Dale J.M."/>
            <person name="Chen H."/>
            <person name="Shinn P."/>
            <person name="Palm C.J."/>
            <person name="Southwick A.M."/>
            <person name="Wu H.C."/>
            <person name="Kim C.J."/>
            <person name="Nguyen M."/>
            <person name="Pham P.K."/>
            <person name="Cheuk R.F."/>
            <person name="Karlin-Newmann G."/>
            <person name="Liu S.X."/>
            <person name="Lam B."/>
            <person name="Sakano H."/>
            <person name="Wu T."/>
            <person name="Yu G."/>
            <person name="Miranda M."/>
            <person name="Quach H.L."/>
            <person name="Tripp M."/>
            <person name="Chang C.H."/>
            <person name="Lee J.M."/>
            <person name="Toriumi M.J."/>
            <person name="Chan M.M."/>
            <person name="Tang C.C."/>
            <person name="Onodera C.S."/>
            <person name="Deng J.M."/>
            <person name="Akiyama K."/>
            <person name="Ansari Y."/>
            <person name="Arakawa T."/>
            <person name="Banh J."/>
            <person name="Banno F."/>
            <person name="Bowser L."/>
            <person name="Brooks S.Y."/>
            <person name="Carninci P."/>
            <person name="Chao Q."/>
            <person name="Choy N."/>
            <person name="Enju A."/>
            <person name="Goldsmith A.D."/>
            <person name="Gurjal M."/>
            <person name="Hansen N.F."/>
            <person name="Hayashizaki Y."/>
            <person name="Johnson-Hopson C."/>
            <person name="Hsuan V.W."/>
            <person name="Iida K."/>
            <person name="Karnes M."/>
            <person name="Khan S."/>
            <person name="Koesema E."/>
            <person name="Ishida J."/>
            <person name="Jiang P.X."/>
            <person name="Jones T."/>
            <person name="Kawai J."/>
            <person name="Kamiya A."/>
            <person name="Meyers C."/>
            <person name="Nakajima M."/>
            <person name="Narusaka M."/>
            <person name="Seki M."/>
            <person name="Sakurai T."/>
            <person name="Satou M."/>
            <person name="Tamse R."/>
            <person name="Vaysberg M."/>
            <person name="Wallender E.K."/>
            <person name="Wong C."/>
            <person name="Yamamura Y."/>
            <person name="Yuan S."/>
            <person name="Shinozaki K."/>
            <person name="Davis R.W."/>
            <person name="Theologis A."/>
            <person name="Ecker J.R."/>
        </authorList>
    </citation>
    <scope>NUCLEOTIDE SEQUENCE [LARGE SCALE MRNA]</scope>
    <source>
        <strain>cv. Columbia</strain>
    </source>
</reference>
<reference key="5">
    <citation type="journal article" date="2001" name="Trends Plant Sci.">
        <title>The U-box protein family in plants.</title>
        <authorList>
            <person name="Azevedo C."/>
            <person name="Santos-Rosa M.J."/>
            <person name="Shirasu K."/>
        </authorList>
    </citation>
    <scope>GENE FAMILY ORGANIZATION</scope>
    <scope>NOMENCLATURE</scope>
</reference>
<reference key="6">
    <citation type="journal article" date="2004" name="Plant Physiol.">
        <title>A large complement of the predicted Arabidopsis ARM repeat proteins are members of the U-box E3 ubiquitin ligase family.</title>
        <authorList>
            <person name="Mudgil Y."/>
            <person name="Shiu S.-H."/>
            <person name="Stone S.L."/>
            <person name="Salt J.N."/>
            <person name="Goring D.R."/>
        </authorList>
    </citation>
    <scope>GENE FAMILY ORGANIZATION</scope>
</reference>
<reference key="7">
    <citation type="journal article" date="2008" name="Plant Physiol.">
        <title>Interactions between the S-domain receptor kinases and AtPUB-ARM E3 ubiquitin ligases suggest a conserved signaling pathway in Arabidopsis.</title>
        <authorList>
            <person name="Samuel M.A."/>
            <person name="Mudgil Y."/>
            <person name="Salt J.N."/>
            <person name="Delmas F."/>
            <person name="Ramachandran S."/>
            <person name="Chilelli A."/>
            <person name="Goring D.R."/>
        </authorList>
    </citation>
    <scope>INTERACTION WITH SD129 AND SD25</scope>
</reference>
<dbReference type="EC" id="2.3.2.27"/>
<dbReference type="EMBL" id="AB026654">
    <property type="protein sequence ID" value="BAB01797.1"/>
    <property type="molecule type" value="Genomic_DNA"/>
</dbReference>
<dbReference type="EMBL" id="CP002686">
    <property type="protein sequence ID" value="AEE76134.1"/>
    <property type="molecule type" value="Genomic_DNA"/>
</dbReference>
<dbReference type="EMBL" id="AK117976">
    <property type="protein sequence ID" value="BAC42613.1"/>
    <property type="molecule type" value="mRNA"/>
</dbReference>
<dbReference type="EMBL" id="BT005359">
    <property type="protein sequence ID" value="AAO63423.1"/>
    <property type="molecule type" value="mRNA"/>
</dbReference>
<dbReference type="RefSeq" id="NP_188501.1">
    <property type="nucleotide sequence ID" value="NM_112757.3"/>
</dbReference>
<dbReference type="SMR" id="Q9LSA6"/>
<dbReference type="BioGRID" id="6735">
    <property type="interactions" value="4"/>
</dbReference>
<dbReference type="IntAct" id="Q9LSA6">
    <property type="interactions" value="3"/>
</dbReference>
<dbReference type="STRING" id="3702.Q9LSA6"/>
<dbReference type="iPTMnet" id="Q9LSA6"/>
<dbReference type="PaxDb" id="3702-AT3G18710.1"/>
<dbReference type="EnsemblPlants" id="AT3G18710.1">
    <property type="protein sequence ID" value="AT3G18710.1"/>
    <property type="gene ID" value="AT3G18710"/>
</dbReference>
<dbReference type="GeneID" id="821402"/>
<dbReference type="Gramene" id="AT3G18710.1">
    <property type="protein sequence ID" value="AT3G18710.1"/>
    <property type="gene ID" value="AT3G18710"/>
</dbReference>
<dbReference type="KEGG" id="ath:AT3G18710"/>
<dbReference type="Araport" id="AT3G18710"/>
<dbReference type="TAIR" id="AT3G18710">
    <property type="gene designation" value="PUB29"/>
</dbReference>
<dbReference type="eggNOG" id="ENOG502QTKN">
    <property type="taxonomic scope" value="Eukaryota"/>
</dbReference>
<dbReference type="HOGENOM" id="CLU_006348_1_1_1"/>
<dbReference type="InParanoid" id="Q9LSA6"/>
<dbReference type="OMA" id="AILWSGC"/>
<dbReference type="PhylomeDB" id="Q9LSA6"/>
<dbReference type="UniPathway" id="UPA00143"/>
<dbReference type="PRO" id="PR:Q9LSA6"/>
<dbReference type="Proteomes" id="UP000006548">
    <property type="component" value="Chromosome 3"/>
</dbReference>
<dbReference type="ExpressionAtlas" id="Q9LSA6">
    <property type="expression patterns" value="baseline and differential"/>
</dbReference>
<dbReference type="GO" id="GO:0009506">
    <property type="term" value="C:plasmodesma"/>
    <property type="evidence" value="ECO:0007005"/>
    <property type="project" value="TAIR"/>
</dbReference>
<dbReference type="GO" id="GO:0070696">
    <property type="term" value="F:transmembrane receptor protein serine/threonine kinase binding"/>
    <property type="evidence" value="ECO:0000353"/>
    <property type="project" value="UniProtKB"/>
</dbReference>
<dbReference type="GO" id="GO:0061630">
    <property type="term" value="F:ubiquitin protein ligase activity"/>
    <property type="evidence" value="ECO:0007669"/>
    <property type="project" value="InterPro"/>
</dbReference>
<dbReference type="GO" id="GO:0004842">
    <property type="term" value="F:ubiquitin-protein transferase activity"/>
    <property type="evidence" value="ECO:0000314"/>
    <property type="project" value="TAIR"/>
</dbReference>
<dbReference type="GO" id="GO:0016567">
    <property type="term" value="P:protein ubiquitination"/>
    <property type="evidence" value="ECO:0000314"/>
    <property type="project" value="TAIR"/>
</dbReference>
<dbReference type="CDD" id="cd16664">
    <property type="entry name" value="RING-Ubox_PUB"/>
    <property type="match status" value="1"/>
</dbReference>
<dbReference type="FunFam" id="1.25.10.10:FF:001243">
    <property type="entry name" value="RING-type E3 ubiquitin transferase"/>
    <property type="match status" value="1"/>
</dbReference>
<dbReference type="FunFam" id="3.30.40.10:FF:000502">
    <property type="entry name" value="RING-type E3 ubiquitin transferase"/>
    <property type="match status" value="1"/>
</dbReference>
<dbReference type="Gene3D" id="1.25.10.10">
    <property type="entry name" value="Leucine-rich Repeat Variant"/>
    <property type="match status" value="1"/>
</dbReference>
<dbReference type="Gene3D" id="3.30.40.10">
    <property type="entry name" value="Zinc/RING finger domain, C3HC4 (zinc finger)"/>
    <property type="match status" value="1"/>
</dbReference>
<dbReference type="InterPro" id="IPR011989">
    <property type="entry name" value="ARM-like"/>
</dbReference>
<dbReference type="InterPro" id="IPR016024">
    <property type="entry name" value="ARM-type_fold"/>
</dbReference>
<dbReference type="InterPro" id="IPR045185">
    <property type="entry name" value="PUB22/23/24-like"/>
</dbReference>
<dbReference type="InterPro" id="IPR045210">
    <property type="entry name" value="RING-Ubox_PUB"/>
</dbReference>
<dbReference type="InterPro" id="IPR003613">
    <property type="entry name" value="Ubox_domain"/>
</dbReference>
<dbReference type="InterPro" id="IPR013083">
    <property type="entry name" value="Znf_RING/FYVE/PHD"/>
</dbReference>
<dbReference type="PANTHER" id="PTHR22849:SF113">
    <property type="entry name" value="U-BOX DOMAIN-CONTAINING PROTEIN 29"/>
    <property type="match status" value="1"/>
</dbReference>
<dbReference type="PANTHER" id="PTHR22849">
    <property type="entry name" value="WDSAM1 PROTEIN"/>
    <property type="match status" value="1"/>
</dbReference>
<dbReference type="Pfam" id="PF04564">
    <property type="entry name" value="U-box"/>
    <property type="match status" value="1"/>
</dbReference>
<dbReference type="SMART" id="SM00504">
    <property type="entry name" value="Ubox"/>
    <property type="match status" value="1"/>
</dbReference>
<dbReference type="SUPFAM" id="SSF48371">
    <property type="entry name" value="ARM repeat"/>
    <property type="match status" value="1"/>
</dbReference>
<dbReference type="SUPFAM" id="SSF57850">
    <property type="entry name" value="RING/U-box"/>
    <property type="match status" value="1"/>
</dbReference>
<dbReference type="PROSITE" id="PS51698">
    <property type="entry name" value="U_BOX"/>
    <property type="match status" value="1"/>
</dbReference>
<sequence length="415" mass="46555">MGRDETETYITVPSFFKCPISLDVMRSPVSLCTGVTYDRASIQRWLDGGNNTCPATMQLLKTKDFVPNLTLQRLINIWSDSIGRRHNGDSPVLNPPSGREVPTKEEVNVLLERLMSLENLMKIVRFVKDSDSNREFLSKKMEFVPMLVDIIRTKKTKIELVIMAIRILDSIKVDRERLSNLMLANDGGDCLTAILLAIQRGNLESKIESVRVLDWISFDAKSKLMIAERDGVLTEMMKSISITESSDPSLIEASLSFLITISKSKRVRSKLIAAKAITKIKDILLTETLTNVAVTEKSLKLLETLSSKREGRLEICGDDNGRCVEGVVKKLLKVSTTATEHAVTILWCLCYVFREDKTVEETVERSNGVTKLLVVIQSNCSAMVRQMAKDLIKVLKFNSSALAAYETKTTHIMPF</sequence>
<evidence type="ECO:0000250" key="1"/>
<evidence type="ECO:0000305" key="2"/>
<gene>
    <name type="primary">PUB29</name>
    <name type="ordered locus">At3g18710</name>
    <name type="ORF">MVE11.7</name>
</gene>
<protein>
    <recommendedName>
        <fullName>U-box domain-containing protein 29</fullName>
        <ecNumber>2.3.2.27</ecNumber>
    </recommendedName>
    <alternativeName>
        <fullName>Plant U-box protein 29</fullName>
    </alternativeName>
    <alternativeName>
        <fullName evidence="2">RING-type E3 ubiquitin transferase PUB29</fullName>
    </alternativeName>
</protein>
<keyword id="KW-1185">Reference proteome</keyword>
<keyword id="KW-0677">Repeat</keyword>
<keyword id="KW-0808">Transferase</keyword>
<keyword id="KW-0833">Ubl conjugation pathway</keyword>
<proteinExistence type="evidence at protein level"/>
<feature type="chain" id="PRO_0000322173" description="U-box domain-containing protein 29">
    <location>
        <begin position="1"/>
        <end position="415"/>
    </location>
</feature>
<feature type="domain" description="U-box">
    <location>
        <begin position="11"/>
        <end position="85"/>
    </location>
</feature>
<feature type="repeat" description="ARM 1">
    <location>
        <begin position="221"/>
        <end position="263"/>
    </location>
</feature>
<feature type="repeat" description="ARM 2">
    <location>
        <begin position="265"/>
        <end position="307"/>
    </location>
</feature>
<feature type="sequence conflict" description="In Ref. 3; AAO63423 and 4; BAC42613." evidence="2" ref="3 4">
    <original>A</original>
    <variation>V</variation>
    <location>
        <position position="220"/>
    </location>
</feature>